<dbReference type="EC" id="3.1.-.-" evidence="3"/>
<dbReference type="EMBL" id="AF036327">
    <property type="protein sequence ID" value="AAB88707.1"/>
    <property type="molecule type" value="mRNA"/>
</dbReference>
<dbReference type="EMBL" id="U64563">
    <property type="protein sequence ID" value="AAB06176.1"/>
    <property type="molecule type" value="mRNA"/>
</dbReference>
<dbReference type="EMBL" id="AF065397">
    <property type="protein sequence ID" value="AAD02814.1"/>
    <property type="molecule type" value="mRNA"/>
</dbReference>
<dbReference type="EMBL" id="BC169761">
    <property type="protein sequence ID" value="AAI69761.1"/>
    <property type="molecule type" value="mRNA"/>
</dbReference>
<dbReference type="EMBL" id="BC169765">
    <property type="protein sequence ID" value="AAI69765.1"/>
    <property type="molecule type" value="mRNA"/>
</dbReference>
<dbReference type="EMBL" id="BC124977">
    <property type="protein sequence ID" value="AAI24978.1"/>
    <property type="molecule type" value="mRNA"/>
</dbReference>
<dbReference type="RefSeq" id="NP_001080960.1">
    <property type="nucleotide sequence ID" value="NM_001087491.1"/>
</dbReference>
<dbReference type="SMR" id="P70040"/>
<dbReference type="BioGRID" id="98905">
    <property type="interactions" value="1"/>
</dbReference>
<dbReference type="IntAct" id="P70040">
    <property type="interactions" value="2"/>
</dbReference>
<dbReference type="DNASU" id="394303"/>
<dbReference type="GeneID" id="394303"/>
<dbReference type="KEGG" id="xla:394303"/>
<dbReference type="AGR" id="Xenbase:XB-GENE-955523"/>
<dbReference type="CTD" id="394303"/>
<dbReference type="Xenbase" id="XB-GENE-955523">
    <property type="gene designation" value="fen1.L"/>
</dbReference>
<dbReference type="OMA" id="IQEVHID"/>
<dbReference type="OrthoDB" id="1937206at2759"/>
<dbReference type="Proteomes" id="UP000186698">
    <property type="component" value="Chromosome 4L"/>
</dbReference>
<dbReference type="Bgee" id="394303">
    <property type="expression patterns" value="Expressed in testis and 19 other cell types or tissues"/>
</dbReference>
<dbReference type="GO" id="GO:0005739">
    <property type="term" value="C:mitochondrion"/>
    <property type="evidence" value="ECO:0007669"/>
    <property type="project" value="UniProtKB-SubCell"/>
</dbReference>
<dbReference type="GO" id="GO:0005730">
    <property type="term" value="C:nucleolus"/>
    <property type="evidence" value="ECO:0007669"/>
    <property type="project" value="UniProtKB-SubCell"/>
</dbReference>
<dbReference type="GO" id="GO:0005654">
    <property type="term" value="C:nucleoplasm"/>
    <property type="evidence" value="ECO:0007669"/>
    <property type="project" value="UniProtKB-SubCell"/>
</dbReference>
<dbReference type="GO" id="GO:0005634">
    <property type="term" value="C:nucleus"/>
    <property type="evidence" value="ECO:0000314"/>
    <property type="project" value="UniProtKB"/>
</dbReference>
<dbReference type="GO" id="GO:0008409">
    <property type="term" value="F:5'-3' exonuclease activity"/>
    <property type="evidence" value="ECO:0000318"/>
    <property type="project" value="GO_Central"/>
</dbReference>
<dbReference type="GO" id="GO:0017108">
    <property type="term" value="F:5'-flap endonuclease activity"/>
    <property type="evidence" value="ECO:0000314"/>
    <property type="project" value="UniProtKB"/>
</dbReference>
<dbReference type="GO" id="GO:0003677">
    <property type="term" value="F:DNA binding"/>
    <property type="evidence" value="ECO:0007669"/>
    <property type="project" value="UniProtKB-UniRule"/>
</dbReference>
<dbReference type="GO" id="GO:0000287">
    <property type="term" value="F:magnesium ion binding"/>
    <property type="evidence" value="ECO:0000318"/>
    <property type="project" value="GO_Central"/>
</dbReference>
<dbReference type="GO" id="GO:0030145">
    <property type="term" value="F:manganese ion binding"/>
    <property type="evidence" value="ECO:0000318"/>
    <property type="project" value="GO_Central"/>
</dbReference>
<dbReference type="GO" id="GO:0004523">
    <property type="term" value="F:RNA-DNA hybrid ribonuclease activity"/>
    <property type="evidence" value="ECO:0000318"/>
    <property type="project" value="GO_Central"/>
</dbReference>
<dbReference type="GO" id="GO:0006284">
    <property type="term" value="P:base-excision repair"/>
    <property type="evidence" value="ECO:0000314"/>
    <property type="project" value="UniProtKB"/>
</dbReference>
<dbReference type="GO" id="GO:0006260">
    <property type="term" value="P:DNA replication"/>
    <property type="evidence" value="ECO:0000353"/>
    <property type="project" value="UniProtKB"/>
</dbReference>
<dbReference type="GO" id="GO:0043137">
    <property type="term" value="P:DNA replication, removal of RNA primer"/>
    <property type="evidence" value="ECO:0007669"/>
    <property type="project" value="UniProtKB-UniRule"/>
</dbReference>
<dbReference type="CDD" id="cd09907">
    <property type="entry name" value="H3TH_FEN1-Euk"/>
    <property type="match status" value="1"/>
</dbReference>
<dbReference type="CDD" id="cd09867">
    <property type="entry name" value="PIN_FEN1"/>
    <property type="match status" value="1"/>
</dbReference>
<dbReference type="FunFam" id="1.10.150.20:FF:000009">
    <property type="entry name" value="Flap endonuclease 1"/>
    <property type="match status" value="1"/>
</dbReference>
<dbReference type="FunFam" id="3.40.50.1010:FF:000003">
    <property type="entry name" value="Flap endonuclease 1"/>
    <property type="match status" value="1"/>
</dbReference>
<dbReference type="Gene3D" id="1.10.150.20">
    <property type="entry name" value="5' to 3' exonuclease, C-terminal subdomain"/>
    <property type="match status" value="1"/>
</dbReference>
<dbReference type="Gene3D" id="3.40.50.1010">
    <property type="entry name" value="5'-nuclease"/>
    <property type="match status" value="1"/>
</dbReference>
<dbReference type="HAMAP" id="MF_00614">
    <property type="entry name" value="Fen"/>
    <property type="match status" value="1"/>
</dbReference>
<dbReference type="InterPro" id="IPR036279">
    <property type="entry name" value="5-3_exonuclease_C_sf"/>
</dbReference>
<dbReference type="InterPro" id="IPR023426">
    <property type="entry name" value="Flap_endonuc"/>
</dbReference>
<dbReference type="InterPro" id="IPR008918">
    <property type="entry name" value="HhH2"/>
</dbReference>
<dbReference type="InterPro" id="IPR029060">
    <property type="entry name" value="PIN-like_dom_sf"/>
</dbReference>
<dbReference type="InterPro" id="IPR006086">
    <property type="entry name" value="XPG-I_dom"/>
</dbReference>
<dbReference type="InterPro" id="IPR006084">
    <property type="entry name" value="XPG/Rad2"/>
</dbReference>
<dbReference type="InterPro" id="IPR019974">
    <property type="entry name" value="XPG_CS"/>
</dbReference>
<dbReference type="InterPro" id="IPR006085">
    <property type="entry name" value="XPG_DNA_repair_N"/>
</dbReference>
<dbReference type="PANTHER" id="PTHR11081:SF73">
    <property type="entry name" value="FLAP ENDONUCLEASE 1"/>
    <property type="match status" value="1"/>
</dbReference>
<dbReference type="PANTHER" id="PTHR11081">
    <property type="entry name" value="FLAP ENDONUCLEASE FAMILY MEMBER"/>
    <property type="match status" value="1"/>
</dbReference>
<dbReference type="Pfam" id="PF00867">
    <property type="entry name" value="XPG_I"/>
    <property type="match status" value="1"/>
</dbReference>
<dbReference type="Pfam" id="PF00752">
    <property type="entry name" value="XPG_N"/>
    <property type="match status" value="1"/>
</dbReference>
<dbReference type="PRINTS" id="PR00853">
    <property type="entry name" value="XPGRADSUPER"/>
</dbReference>
<dbReference type="SMART" id="SM00279">
    <property type="entry name" value="HhH2"/>
    <property type="match status" value="1"/>
</dbReference>
<dbReference type="SMART" id="SM00484">
    <property type="entry name" value="XPGI"/>
    <property type="match status" value="1"/>
</dbReference>
<dbReference type="SMART" id="SM00485">
    <property type="entry name" value="XPGN"/>
    <property type="match status" value="1"/>
</dbReference>
<dbReference type="SUPFAM" id="SSF47807">
    <property type="entry name" value="5' to 3' exonuclease, C-terminal subdomain"/>
    <property type="match status" value="1"/>
</dbReference>
<dbReference type="SUPFAM" id="SSF88723">
    <property type="entry name" value="PIN domain-like"/>
    <property type="match status" value="1"/>
</dbReference>
<dbReference type="PROSITE" id="PS00841">
    <property type="entry name" value="XPG_1"/>
    <property type="match status" value="1"/>
</dbReference>
<feature type="chain" id="PRO_0000244491" description="Flap endonuclease 1-A">
    <location>
        <begin position="1"/>
        <end position="382"/>
    </location>
</feature>
<feature type="region of interest" description="N-domain" evidence="2">
    <location>
        <begin position="1"/>
        <end position="104"/>
    </location>
</feature>
<feature type="region of interest" description="I-domain" evidence="2">
    <location>
        <begin position="122"/>
        <end position="253"/>
    </location>
</feature>
<feature type="region of interest" description="Interaction with PCNA" evidence="3">
    <location>
        <begin position="336"/>
        <end position="344"/>
    </location>
</feature>
<feature type="region of interest" description="Disordered" evidence="4">
    <location>
        <begin position="350"/>
        <end position="382"/>
    </location>
</feature>
<feature type="binding site" evidence="3">
    <location>
        <position position="34"/>
    </location>
    <ligand>
        <name>Mg(2+)</name>
        <dbReference type="ChEBI" id="CHEBI:18420"/>
        <label>1</label>
    </ligand>
</feature>
<feature type="binding site" evidence="1 3">
    <location>
        <position position="47"/>
    </location>
    <ligand>
        <name>DNA</name>
        <dbReference type="ChEBI" id="CHEBI:16991"/>
    </ligand>
</feature>
<feature type="binding site" evidence="1 3">
    <location>
        <position position="70"/>
    </location>
    <ligand>
        <name>DNA</name>
        <dbReference type="ChEBI" id="CHEBI:16991"/>
    </ligand>
</feature>
<feature type="binding site" evidence="3">
    <location>
        <position position="86"/>
    </location>
    <ligand>
        <name>Mg(2+)</name>
        <dbReference type="ChEBI" id="CHEBI:18420"/>
        <label>1</label>
    </ligand>
</feature>
<feature type="binding site" evidence="1 3">
    <location>
        <position position="158"/>
    </location>
    <ligand>
        <name>DNA</name>
        <dbReference type="ChEBI" id="CHEBI:16991"/>
    </ligand>
</feature>
<feature type="binding site" evidence="3">
    <location>
        <position position="158"/>
    </location>
    <ligand>
        <name>Mg(2+)</name>
        <dbReference type="ChEBI" id="CHEBI:18420"/>
        <label>1</label>
    </ligand>
</feature>
<feature type="binding site" evidence="3">
    <location>
        <position position="160"/>
    </location>
    <ligand>
        <name>Mg(2+)</name>
        <dbReference type="ChEBI" id="CHEBI:18420"/>
        <label>1</label>
    </ligand>
</feature>
<feature type="binding site" evidence="3">
    <location>
        <position position="179"/>
    </location>
    <ligand>
        <name>Mg(2+)</name>
        <dbReference type="ChEBI" id="CHEBI:18420"/>
        <label>2</label>
    </ligand>
</feature>
<feature type="binding site" evidence="3">
    <location>
        <position position="181"/>
    </location>
    <ligand>
        <name>Mg(2+)</name>
        <dbReference type="ChEBI" id="CHEBI:18420"/>
        <label>2</label>
    </ligand>
</feature>
<feature type="binding site" evidence="1 3">
    <location>
        <position position="231"/>
    </location>
    <ligand>
        <name>DNA</name>
        <dbReference type="ChEBI" id="CHEBI:16991"/>
    </ligand>
</feature>
<feature type="binding site" evidence="1 3">
    <location>
        <position position="233"/>
    </location>
    <ligand>
        <name>DNA</name>
        <dbReference type="ChEBI" id="CHEBI:16991"/>
    </ligand>
</feature>
<feature type="binding site" evidence="3">
    <location>
        <position position="233"/>
    </location>
    <ligand>
        <name>Mg(2+)</name>
        <dbReference type="ChEBI" id="CHEBI:18420"/>
        <label>2</label>
    </ligand>
</feature>
<feature type="sequence variant" description="In allele fen-1a'." evidence="5 6 7">
    <original>V</original>
    <variation>I</variation>
    <location>
        <position position="33"/>
    </location>
</feature>
<comment type="function">
    <text evidence="3 5 6">Structure-specific nuclease with 5'-flap endonuclease and 5'-3' exonuclease activities involved in DNA replication and repair. During DNA replication, cleaves the 5'-overhanging flap structure that is generated by displacement synthesis when DNA polymerase encounters the 5'-end of a downstream Okazaki fragment. It enters the flap from the 5'-end and then tracks to cleave the flap base, leaving a nick for ligation. Also involved in the long patch base excision repair (LP-BER) pathway, by cleaving within the apurinic/apyrimidinic (AP) site-terminated flap. Acts as a genome stabilization factor that prevents flaps from equilibrating into structures that lead to duplications and deletions. Also possesses 5'-3' exonuclease activity on nicked or gapped double-stranded DNA, and exhibits RNase H activity. Also involved in replication and repair of rDNA and in repairing mitochondrial DNA.</text>
</comment>
<comment type="cofactor">
    <cofactor evidence="3">
        <name>Mg(2+)</name>
        <dbReference type="ChEBI" id="CHEBI:18420"/>
    </cofactor>
    <text evidence="3">Binds 2 magnesium ions per subunit. They probably participate in the reaction catalyzed by the enzyme. May bind an additional third magnesium ion after substrate binding.</text>
</comment>
<comment type="subunit">
    <text evidence="3">Interacts with PCNA. Three molecules of fen1 bind to one PCNA trimer with each molecule binding to one PCNA monomer. PCNA stimulates the nuclease activity without altering cleavage specificity.</text>
</comment>
<comment type="subcellular location">
    <subcellularLocation>
        <location evidence="3">Nucleus</location>
        <location evidence="3">Nucleolus</location>
    </subcellularLocation>
    <subcellularLocation>
        <location evidence="3">Nucleus</location>
        <location evidence="3">Nucleoplasm</location>
    </subcellularLocation>
    <subcellularLocation>
        <location evidence="3">Mitochondrion</location>
    </subcellularLocation>
    <text evidence="3">Resides mostly in the nucleoli and relocalizes to the nucleoplasm upon DNA damage.</text>
</comment>
<comment type="developmental stage">
    <text evidence="6">First expressed at a low level in stage II oocytes. Expression increases dramatically from oocyte stages III to V (at protein level). Also expressed in embryos.</text>
</comment>
<comment type="PTM">
    <text evidence="3">Phosphorylated. Phosphorylation upon DNA damage induces relocalization to the nuclear plasma.</text>
</comment>
<comment type="similarity">
    <text evidence="1 3">Belongs to the XPG/RAD2 endonuclease family. FEN1 subfamily.</text>
</comment>
<organism>
    <name type="scientific">Xenopus laevis</name>
    <name type="common">African clawed frog</name>
    <dbReference type="NCBI Taxonomy" id="8355"/>
    <lineage>
        <taxon>Eukaryota</taxon>
        <taxon>Metazoa</taxon>
        <taxon>Chordata</taxon>
        <taxon>Craniata</taxon>
        <taxon>Vertebrata</taxon>
        <taxon>Euteleostomi</taxon>
        <taxon>Amphibia</taxon>
        <taxon>Batrachia</taxon>
        <taxon>Anura</taxon>
        <taxon>Pipoidea</taxon>
        <taxon>Pipidae</taxon>
        <taxon>Xenopodinae</taxon>
        <taxon>Xenopus</taxon>
        <taxon>Xenopus</taxon>
    </lineage>
</organism>
<evidence type="ECO:0000250" key="1">
    <source>
        <dbReference type="UniProtKB" id="P39748"/>
    </source>
</evidence>
<evidence type="ECO:0000255" key="2"/>
<evidence type="ECO:0000255" key="3">
    <source>
        <dbReference type="HAMAP-Rule" id="MF_03140"/>
    </source>
</evidence>
<evidence type="ECO:0000256" key="4">
    <source>
        <dbReference type="SAM" id="MobiDB-lite"/>
    </source>
</evidence>
<evidence type="ECO:0000269" key="5">
    <source>
    </source>
</evidence>
<evidence type="ECO:0000269" key="6">
    <source>
    </source>
</evidence>
<evidence type="ECO:0000269" key="7">
    <source ref="4"/>
</evidence>
<evidence type="ECO:0000305" key="8"/>
<evidence type="ECO:0000312" key="9">
    <source>
        <dbReference type="EMBL" id="AAB06176.1"/>
    </source>
</evidence>
<evidence type="ECO:0000312" key="10">
    <source>
        <dbReference type="EMBL" id="AAB88707.1"/>
    </source>
</evidence>
<evidence type="ECO:0000312" key="11">
    <source>
        <dbReference type="EMBL" id="AAD02814.1"/>
    </source>
</evidence>
<name>FEN1A_XENLA</name>
<proteinExistence type="evidence at protein level"/>
<accession>P70040</accession>
<accession>B7ZQC8</accession>
<accession>O57351</accession>
<accession>Q08AW7</accession>
<gene>
    <name type="primary">fen1-a</name>
</gene>
<sequence length="382" mass="42668">MGIHGLAKLIADVAPAAIKEHDIKSYFGRKVAVDASMCIYQFLIAVRQDGNTLQNEEGETTSHLMGMFYRTIRMVEHGIKPVYVFDGKPPQMKSGELAKRSERRAEAEKLLEAAEEAGEVENIEKFTKRLVKVTKQHNEECKKLLTLMGIPYVDAPCEAEATCAALVKAGKVYAAATEDMDALTFGTPVLLRHLTASEAKKLPIQEFHLNRVIQDIGITHEQFVDLCILLGSDYCETIRGIGPKRAIDLIRQHKTIDEIIDNIDLKKYPVPENWLHKEAKHLFLEPEVVDTDITELKWIEPDEEGLVAFMCGEKQFSEDRIRNGAKKLAKNRQGSTQGRLDDFFKVTGSVSSTKRKEAESKGSAKKKAKTGGTPAGKFKRGK</sequence>
<protein>
    <recommendedName>
        <fullName evidence="3">Flap endonuclease 1-A</fullName>
        <shortName evidence="3">FEN-1-A</shortName>
        <ecNumber evidence="3">3.1.-.-</ecNumber>
    </recommendedName>
    <alternativeName>
        <fullName evidence="3">Flap structure-specific endonuclease 1-A</fullName>
        <shortName>xFEN-1a</shortName>
    </alternativeName>
</protein>
<reference evidence="8 10" key="1">
    <citation type="journal article" date="1998" name="J. Biol. Chem.">
        <title>Involvement of flap endonuclease 1 in base excision DNA repair.</title>
        <authorList>
            <person name="Kim K."/>
            <person name="Biade S."/>
            <person name="Matsumoto Y."/>
        </authorList>
    </citation>
    <scope>NUCLEOTIDE SEQUENCE [MRNA]</scope>
    <scope>FUNCTION</scope>
    <scope>IDENTIFICATION IN A COMPLEX WITH PCNA</scope>
    <scope>VARIANT ILE-33</scope>
    <source>
        <tissue evidence="5">Oocyte</tissue>
    </source>
</reference>
<reference evidence="8 9" key="2">
    <citation type="journal article" date="1998" name="J. Biol. Chem.">
        <title>Characterization of FEN-1 from Xenopus laevis. cDNA cloning and role in DNA metabolism.</title>
        <authorList>
            <person name="Bibikova M."/>
            <person name="Wu B."/>
            <person name="Chi E."/>
            <person name="Kim K.-H."/>
            <person name="Trautman J.K."/>
            <person name="Carroll D."/>
        </authorList>
    </citation>
    <scope>NUCLEOTIDE SEQUENCE [MRNA]</scope>
    <scope>FUNCTION</scope>
    <scope>COFACTOR</scope>
    <scope>IDENTIFICATION IN A COMPLEX WITH PCNA</scope>
    <scope>SUBCELLULAR LOCATION</scope>
    <scope>DEVELOPMENTAL STAGE</scope>
    <scope>VARIANT ILE-33</scope>
    <source>
        <tissue evidence="6">Tadpole head</tissue>
    </source>
</reference>
<reference evidence="11" key="3">
    <citation type="submission" date="1998-05" db="EMBL/GenBank/DDBJ databases">
        <title>Cloning and investigation of Xenopus Fen1: developmental expression and function in DNA replication.</title>
        <authorList>
            <person name="Li J.-L."/>
            <person name="Cox L.S."/>
        </authorList>
    </citation>
    <scope>NUCLEOTIDE SEQUENCE [MRNA]</scope>
</reference>
<reference evidence="11" key="4">
    <citation type="submission" date="2006-10" db="EMBL/GenBank/DDBJ databases">
        <authorList>
            <consortium name="NIH - Xenopus Gene Collection (XGC) project"/>
        </authorList>
    </citation>
    <scope>NUCLEOTIDE SEQUENCE [LARGE SCALE MRNA]</scope>
    <scope>VARIANT ILE-33</scope>
    <source>
        <tissue>Oocyte</tissue>
        <tissue>Ovary</tissue>
    </source>
</reference>
<keyword id="KW-0227">DNA damage</keyword>
<keyword id="KW-0234">DNA repair</keyword>
<keyword id="KW-0235">DNA replication</keyword>
<keyword id="KW-0255">Endonuclease</keyword>
<keyword id="KW-0269">Exonuclease</keyword>
<keyword id="KW-0378">Hydrolase</keyword>
<keyword id="KW-0460">Magnesium</keyword>
<keyword id="KW-0479">Metal-binding</keyword>
<keyword id="KW-0496">Mitochondrion</keyword>
<keyword id="KW-0540">Nuclease</keyword>
<keyword id="KW-0539">Nucleus</keyword>
<keyword id="KW-0597">Phosphoprotein</keyword>
<keyword id="KW-1185">Reference proteome</keyword>